<accession>B2U2Q6</accession>
<organism>
    <name type="scientific">Shigella boydii serotype 18 (strain CDC 3083-94 / BS512)</name>
    <dbReference type="NCBI Taxonomy" id="344609"/>
    <lineage>
        <taxon>Bacteria</taxon>
        <taxon>Pseudomonadati</taxon>
        <taxon>Pseudomonadota</taxon>
        <taxon>Gammaproteobacteria</taxon>
        <taxon>Enterobacterales</taxon>
        <taxon>Enterobacteriaceae</taxon>
        <taxon>Shigella</taxon>
    </lineage>
</organism>
<protein>
    <recommendedName>
        <fullName evidence="1">Ribosomal RNA small subunit methyltransferase B</fullName>
        <ecNumber evidence="1">2.1.1.176</ecNumber>
    </recommendedName>
    <alternativeName>
        <fullName evidence="1">16S rRNA m5C967 methyltransferase</fullName>
    </alternativeName>
    <alternativeName>
        <fullName evidence="1">rRNA (cytosine-C(5)-)-methyltransferase RsmB</fullName>
    </alternativeName>
</protein>
<evidence type="ECO:0000255" key="1">
    <source>
        <dbReference type="HAMAP-Rule" id="MF_01856"/>
    </source>
</evidence>
<reference key="1">
    <citation type="submission" date="2008-05" db="EMBL/GenBank/DDBJ databases">
        <title>Complete sequence of Shigella boydii serotype 18 strain BS512.</title>
        <authorList>
            <person name="Rasko D.A."/>
            <person name="Rosovitz M."/>
            <person name="Maurelli A.T."/>
            <person name="Myers G."/>
            <person name="Seshadri R."/>
            <person name="Cer R."/>
            <person name="Jiang L."/>
            <person name="Ravel J."/>
            <person name="Sebastian Y."/>
        </authorList>
    </citation>
    <scope>NUCLEOTIDE SEQUENCE [LARGE SCALE GENOMIC DNA]</scope>
    <source>
        <strain>CDC 3083-94 / BS512</strain>
    </source>
</reference>
<sequence>MKKQRNLRSMAAQAVEQVVEQGQSLSNILPPLQQKVSDKDKALLQELCFGVLRTLSQLDWLINKLMARPMTGKQRTVHYLIMVGLYQLLYTRIPPHAALAETVEGAIAIKRPQLKGLINGVLRQFQRQQEELLAKFNASDARYLHPSWLLKRLQKAYPEQWQSIVEANNQRPPMWLRVNRTHHSRDSWLALLDEAGMKGFPHADYPDAVRLETPAPVHALPGFEDGWVTVQDASAQGCMTWLAPQNSEHILDLCAAPGGKTTHILEVAPEAQVVAVDIDEQRLSRVYDNLKRLGMKATVKQGDGRYPSQWCGEQQFDRILLDAPCSATGVIRHHPDIKWLRRDRDIPELAQLQSEILDAIWPHLKSGGTLVYATCSVLPEENSLQIKAFLQRTADAELCETGAPEQPGKQNLPGAEEGDGFFYAKLIKK</sequence>
<keyword id="KW-0963">Cytoplasm</keyword>
<keyword id="KW-0489">Methyltransferase</keyword>
<keyword id="KW-1185">Reference proteome</keyword>
<keyword id="KW-0694">RNA-binding</keyword>
<keyword id="KW-0698">rRNA processing</keyword>
<keyword id="KW-0949">S-adenosyl-L-methionine</keyword>
<keyword id="KW-0808">Transferase</keyword>
<proteinExistence type="inferred from homology"/>
<dbReference type="EC" id="2.1.1.176" evidence="1"/>
<dbReference type="EMBL" id="CP001063">
    <property type="protein sequence ID" value="ACD08621.1"/>
    <property type="molecule type" value="Genomic_DNA"/>
</dbReference>
<dbReference type="RefSeq" id="WP_000744786.1">
    <property type="nucleotide sequence ID" value="NC_010658.1"/>
</dbReference>
<dbReference type="SMR" id="B2U2Q6"/>
<dbReference type="STRING" id="344609.SbBS512_E3673"/>
<dbReference type="KEGG" id="sbc:SbBS512_E3673"/>
<dbReference type="HOGENOM" id="CLU_005316_0_4_6"/>
<dbReference type="Proteomes" id="UP000001030">
    <property type="component" value="Chromosome"/>
</dbReference>
<dbReference type="GO" id="GO:0005829">
    <property type="term" value="C:cytosol"/>
    <property type="evidence" value="ECO:0007669"/>
    <property type="project" value="TreeGrafter"/>
</dbReference>
<dbReference type="GO" id="GO:0003723">
    <property type="term" value="F:RNA binding"/>
    <property type="evidence" value="ECO:0007669"/>
    <property type="project" value="UniProtKB-KW"/>
</dbReference>
<dbReference type="GO" id="GO:0009383">
    <property type="term" value="F:rRNA (cytosine-C5-)-methyltransferase activity"/>
    <property type="evidence" value="ECO:0007669"/>
    <property type="project" value="TreeGrafter"/>
</dbReference>
<dbReference type="GO" id="GO:0006355">
    <property type="term" value="P:regulation of DNA-templated transcription"/>
    <property type="evidence" value="ECO:0007669"/>
    <property type="project" value="InterPro"/>
</dbReference>
<dbReference type="GO" id="GO:0070475">
    <property type="term" value="P:rRNA base methylation"/>
    <property type="evidence" value="ECO:0007669"/>
    <property type="project" value="TreeGrafter"/>
</dbReference>
<dbReference type="CDD" id="cd02440">
    <property type="entry name" value="AdoMet_MTases"/>
    <property type="match status" value="1"/>
</dbReference>
<dbReference type="CDD" id="cd00620">
    <property type="entry name" value="Methyltransferase_Sun"/>
    <property type="match status" value="1"/>
</dbReference>
<dbReference type="FunFam" id="1.10.287.730:FF:000001">
    <property type="entry name" value="Ribosomal RNA small subunit methyltransferase B"/>
    <property type="match status" value="1"/>
</dbReference>
<dbReference type="FunFam" id="1.10.940.10:FF:000002">
    <property type="entry name" value="Ribosomal RNA small subunit methyltransferase B"/>
    <property type="match status" value="1"/>
</dbReference>
<dbReference type="FunFam" id="3.30.70.1170:FF:000002">
    <property type="entry name" value="Ribosomal RNA small subunit methyltransferase B"/>
    <property type="match status" value="1"/>
</dbReference>
<dbReference type="FunFam" id="3.40.50.150:FF:000022">
    <property type="entry name" value="Ribosomal RNA small subunit methyltransferase B"/>
    <property type="match status" value="1"/>
</dbReference>
<dbReference type="Gene3D" id="1.10.287.730">
    <property type="entry name" value="Helix hairpin bin"/>
    <property type="match status" value="1"/>
</dbReference>
<dbReference type="Gene3D" id="1.10.940.10">
    <property type="entry name" value="NusB-like"/>
    <property type="match status" value="1"/>
</dbReference>
<dbReference type="Gene3D" id="3.30.70.1170">
    <property type="entry name" value="Sun protein, domain 3"/>
    <property type="match status" value="1"/>
</dbReference>
<dbReference type="Gene3D" id="3.40.50.150">
    <property type="entry name" value="Vaccinia Virus protein VP39"/>
    <property type="match status" value="1"/>
</dbReference>
<dbReference type="HAMAP" id="MF_01856">
    <property type="entry name" value="16SrRNA_methyltr_B"/>
    <property type="match status" value="1"/>
</dbReference>
<dbReference type="InterPro" id="IPR049560">
    <property type="entry name" value="MeTrfase_RsmB-F_NOP2_cat"/>
</dbReference>
<dbReference type="InterPro" id="IPR001678">
    <property type="entry name" value="MeTrfase_RsmB-F_NOP2_dom"/>
</dbReference>
<dbReference type="InterPro" id="IPR035926">
    <property type="entry name" value="NusB-like_sf"/>
</dbReference>
<dbReference type="InterPro" id="IPR006027">
    <property type="entry name" value="NusB_RsmB_TIM44"/>
</dbReference>
<dbReference type="InterPro" id="IPR023267">
    <property type="entry name" value="RCMT"/>
</dbReference>
<dbReference type="InterPro" id="IPR004573">
    <property type="entry name" value="rRNA_ssu_MeTfrase_B"/>
</dbReference>
<dbReference type="InterPro" id="IPR023541">
    <property type="entry name" value="rRNA_ssu_MeTfrase_B_ent"/>
</dbReference>
<dbReference type="InterPro" id="IPR054728">
    <property type="entry name" value="RsmB-like_ferredoxin"/>
</dbReference>
<dbReference type="InterPro" id="IPR048019">
    <property type="entry name" value="RsmB-like_N"/>
</dbReference>
<dbReference type="InterPro" id="IPR018314">
    <property type="entry name" value="RsmB/NOL1/NOP2-like_CS"/>
</dbReference>
<dbReference type="InterPro" id="IPR029063">
    <property type="entry name" value="SAM-dependent_MTases_sf"/>
</dbReference>
<dbReference type="NCBIfam" id="NF008149">
    <property type="entry name" value="PRK10901.1"/>
    <property type="match status" value="1"/>
</dbReference>
<dbReference type="NCBIfam" id="NF011494">
    <property type="entry name" value="PRK14902.1"/>
    <property type="match status" value="1"/>
</dbReference>
<dbReference type="NCBIfam" id="TIGR00563">
    <property type="entry name" value="rsmB"/>
    <property type="match status" value="1"/>
</dbReference>
<dbReference type="PANTHER" id="PTHR22807:SF61">
    <property type="entry name" value="NOL1_NOP2_SUN FAMILY PROTEIN _ ANTITERMINATION NUSB DOMAIN-CONTAINING PROTEIN"/>
    <property type="match status" value="1"/>
</dbReference>
<dbReference type="PANTHER" id="PTHR22807">
    <property type="entry name" value="NOP2 YEAST -RELATED NOL1/NOP2/FMU SUN DOMAIN-CONTAINING"/>
    <property type="match status" value="1"/>
</dbReference>
<dbReference type="Pfam" id="PF01189">
    <property type="entry name" value="Methyltr_RsmB-F"/>
    <property type="match status" value="1"/>
</dbReference>
<dbReference type="Pfam" id="PF01029">
    <property type="entry name" value="NusB"/>
    <property type="match status" value="1"/>
</dbReference>
<dbReference type="Pfam" id="PF22458">
    <property type="entry name" value="RsmF-B_ferredox"/>
    <property type="match status" value="1"/>
</dbReference>
<dbReference type="PRINTS" id="PR02008">
    <property type="entry name" value="RCMTFAMILY"/>
</dbReference>
<dbReference type="SUPFAM" id="SSF48013">
    <property type="entry name" value="NusB-like"/>
    <property type="match status" value="1"/>
</dbReference>
<dbReference type="SUPFAM" id="SSF53335">
    <property type="entry name" value="S-adenosyl-L-methionine-dependent methyltransferases"/>
    <property type="match status" value="1"/>
</dbReference>
<dbReference type="PROSITE" id="PS01153">
    <property type="entry name" value="NOL1_NOP2_SUN"/>
    <property type="match status" value="1"/>
</dbReference>
<dbReference type="PROSITE" id="PS51686">
    <property type="entry name" value="SAM_MT_RSMB_NOP"/>
    <property type="match status" value="1"/>
</dbReference>
<comment type="function">
    <text evidence="1">Specifically methylates the cytosine at position 967 (m5C967) of 16S rRNA.</text>
</comment>
<comment type="catalytic activity">
    <reaction evidence="1">
        <text>cytidine(967) in 16S rRNA + S-adenosyl-L-methionine = 5-methylcytidine(967) in 16S rRNA + S-adenosyl-L-homocysteine + H(+)</text>
        <dbReference type="Rhea" id="RHEA:42748"/>
        <dbReference type="Rhea" id="RHEA-COMP:10219"/>
        <dbReference type="Rhea" id="RHEA-COMP:10220"/>
        <dbReference type="ChEBI" id="CHEBI:15378"/>
        <dbReference type="ChEBI" id="CHEBI:57856"/>
        <dbReference type="ChEBI" id="CHEBI:59789"/>
        <dbReference type="ChEBI" id="CHEBI:74483"/>
        <dbReference type="ChEBI" id="CHEBI:82748"/>
        <dbReference type="EC" id="2.1.1.176"/>
    </reaction>
</comment>
<comment type="subcellular location">
    <subcellularLocation>
        <location evidence="1">Cytoplasm</location>
    </subcellularLocation>
</comment>
<comment type="similarity">
    <text evidence="1">Belongs to the class I-like SAM-binding methyltransferase superfamily. RsmB/NOP family.</text>
</comment>
<gene>
    <name evidence="1" type="primary">rsmB</name>
    <name evidence="1" type="synonym">sun</name>
    <name type="ordered locus">SbBS512_E3673</name>
</gene>
<name>RSMB_SHIB3</name>
<feature type="chain" id="PRO_0000366176" description="Ribosomal RNA small subunit methyltransferase B">
    <location>
        <begin position="1"/>
        <end position="429"/>
    </location>
</feature>
<feature type="active site" description="Nucleophile" evidence="1">
    <location>
        <position position="375"/>
    </location>
</feature>
<feature type="binding site" evidence="1">
    <location>
        <begin position="254"/>
        <end position="260"/>
    </location>
    <ligand>
        <name>S-adenosyl-L-methionine</name>
        <dbReference type="ChEBI" id="CHEBI:59789"/>
    </ligand>
</feature>
<feature type="binding site" evidence="1">
    <location>
        <position position="277"/>
    </location>
    <ligand>
        <name>S-adenosyl-L-methionine</name>
        <dbReference type="ChEBI" id="CHEBI:59789"/>
    </ligand>
</feature>
<feature type="binding site" evidence="1">
    <location>
        <position position="303"/>
    </location>
    <ligand>
        <name>S-adenosyl-L-methionine</name>
        <dbReference type="ChEBI" id="CHEBI:59789"/>
    </ligand>
</feature>
<feature type="binding site" evidence="1">
    <location>
        <position position="322"/>
    </location>
    <ligand>
        <name>S-adenosyl-L-methionine</name>
        <dbReference type="ChEBI" id="CHEBI:59789"/>
    </ligand>
</feature>